<keyword id="KW-1185">Reference proteome</keyword>
<sequence>MPTEDRVCFTWEEYARHVREYWRGVAESDGFDSEDIRSPVVLTGLFHYDCQSGRHYPEPLLGTSFELAALLKFNKTMNLTSSYYITLLAHDPSLEKTFQVRVDEREYGSLDLTVAIARPKKDQNEVSDGVFQGPLPDWPSEDALRHDRNRFYELEISEWQATDWISLYLKLLILATDRGMFVQTGLPQVQILEVVIETEEENEKPPDKRLNARRAHVYITFTGLPKSPRLVEIGEHVERKAIIRRVIDASGYLTLLGKFWSGKDTDQQRSMTLPSGEQAESSKKRPRLS</sequence>
<organism>
    <name type="scientific">Arabidopsis thaliana</name>
    <name type="common">Mouse-ear cress</name>
    <dbReference type="NCBI Taxonomy" id="3702"/>
    <lineage>
        <taxon>Eukaryota</taxon>
        <taxon>Viridiplantae</taxon>
        <taxon>Streptophyta</taxon>
        <taxon>Embryophyta</taxon>
        <taxon>Tracheophyta</taxon>
        <taxon>Spermatophyta</taxon>
        <taxon>Magnoliopsida</taxon>
        <taxon>eudicotyledons</taxon>
        <taxon>Gunneridae</taxon>
        <taxon>Pentapetalae</taxon>
        <taxon>rosids</taxon>
        <taxon>malvids</taxon>
        <taxon>Brassicales</taxon>
        <taxon>Brassicaceae</taxon>
        <taxon>Camelineae</taxon>
        <taxon>Arabidopsis</taxon>
    </lineage>
</organism>
<protein>
    <recommendedName>
        <fullName>UPF0725 protein At1g27860</fullName>
    </recommendedName>
</protein>
<reference key="1">
    <citation type="journal article" date="2000" name="Nature">
        <title>Sequence and analysis of chromosome 1 of the plant Arabidopsis thaliana.</title>
        <authorList>
            <person name="Theologis A."/>
            <person name="Ecker J.R."/>
            <person name="Palm C.J."/>
            <person name="Federspiel N.A."/>
            <person name="Kaul S."/>
            <person name="White O."/>
            <person name="Alonso J."/>
            <person name="Altafi H."/>
            <person name="Araujo R."/>
            <person name="Bowman C.L."/>
            <person name="Brooks S.Y."/>
            <person name="Buehler E."/>
            <person name="Chan A."/>
            <person name="Chao Q."/>
            <person name="Chen H."/>
            <person name="Cheuk R.F."/>
            <person name="Chin C.W."/>
            <person name="Chung M.K."/>
            <person name="Conn L."/>
            <person name="Conway A.B."/>
            <person name="Conway A.R."/>
            <person name="Creasy T.H."/>
            <person name="Dewar K."/>
            <person name="Dunn P."/>
            <person name="Etgu P."/>
            <person name="Feldblyum T.V."/>
            <person name="Feng J.-D."/>
            <person name="Fong B."/>
            <person name="Fujii C.Y."/>
            <person name="Gill J.E."/>
            <person name="Goldsmith A.D."/>
            <person name="Haas B."/>
            <person name="Hansen N.F."/>
            <person name="Hughes B."/>
            <person name="Huizar L."/>
            <person name="Hunter J.L."/>
            <person name="Jenkins J."/>
            <person name="Johnson-Hopson C."/>
            <person name="Khan S."/>
            <person name="Khaykin E."/>
            <person name="Kim C.J."/>
            <person name="Koo H.L."/>
            <person name="Kremenetskaia I."/>
            <person name="Kurtz D.B."/>
            <person name="Kwan A."/>
            <person name="Lam B."/>
            <person name="Langin-Hooper S."/>
            <person name="Lee A."/>
            <person name="Lee J.M."/>
            <person name="Lenz C.A."/>
            <person name="Li J.H."/>
            <person name="Li Y.-P."/>
            <person name="Lin X."/>
            <person name="Liu S.X."/>
            <person name="Liu Z.A."/>
            <person name="Luros J.S."/>
            <person name="Maiti R."/>
            <person name="Marziali A."/>
            <person name="Militscher J."/>
            <person name="Miranda M."/>
            <person name="Nguyen M."/>
            <person name="Nierman W.C."/>
            <person name="Osborne B.I."/>
            <person name="Pai G."/>
            <person name="Peterson J."/>
            <person name="Pham P.K."/>
            <person name="Rizzo M."/>
            <person name="Rooney T."/>
            <person name="Rowley D."/>
            <person name="Sakano H."/>
            <person name="Salzberg S.L."/>
            <person name="Schwartz J.R."/>
            <person name="Shinn P."/>
            <person name="Southwick A.M."/>
            <person name="Sun H."/>
            <person name="Tallon L.J."/>
            <person name="Tambunga G."/>
            <person name="Toriumi M.J."/>
            <person name="Town C.D."/>
            <person name="Utterback T."/>
            <person name="Van Aken S."/>
            <person name="Vaysberg M."/>
            <person name="Vysotskaia V.S."/>
            <person name="Walker M."/>
            <person name="Wu D."/>
            <person name="Yu G."/>
            <person name="Fraser C.M."/>
            <person name="Venter J.C."/>
            <person name="Davis R.W."/>
        </authorList>
    </citation>
    <scope>NUCLEOTIDE SEQUENCE [LARGE SCALE GENOMIC DNA]</scope>
    <source>
        <strain>cv. Columbia</strain>
    </source>
</reference>
<reference key="2">
    <citation type="journal article" date="2017" name="Plant J.">
        <title>Araport11: a complete reannotation of the Arabidopsis thaliana reference genome.</title>
        <authorList>
            <person name="Cheng C.Y."/>
            <person name="Krishnakumar V."/>
            <person name="Chan A.P."/>
            <person name="Thibaud-Nissen F."/>
            <person name="Schobel S."/>
            <person name="Town C.D."/>
        </authorList>
    </citation>
    <scope>GENOME REANNOTATION</scope>
    <source>
        <strain>cv. Columbia</strain>
    </source>
</reference>
<accession>Q9C6N2</accession>
<feature type="chain" id="PRO_0000363134" description="UPF0725 protein At1g27860">
    <location>
        <begin position="1"/>
        <end position="289"/>
    </location>
</feature>
<feature type="region of interest" description="Disordered" evidence="1">
    <location>
        <begin position="266"/>
        <end position="289"/>
    </location>
</feature>
<feature type="compositionally biased region" description="Polar residues" evidence="1">
    <location>
        <begin position="268"/>
        <end position="279"/>
    </location>
</feature>
<dbReference type="EMBL" id="AC079280">
    <property type="protein sequence ID" value="AAG50577.1"/>
    <property type="molecule type" value="Genomic_DNA"/>
</dbReference>
<dbReference type="EMBL" id="CP002684">
    <property type="protein sequence ID" value="AEE30885.1"/>
    <property type="molecule type" value="Genomic_DNA"/>
</dbReference>
<dbReference type="PIR" id="G86403">
    <property type="entry name" value="G86403"/>
</dbReference>
<dbReference type="RefSeq" id="NP_174107.1">
    <property type="nucleotide sequence ID" value="NM_102551.1"/>
</dbReference>
<dbReference type="SMR" id="Q9C6N2"/>
<dbReference type="STRING" id="3702.Q9C6N2"/>
<dbReference type="PaxDb" id="3702-AT1G27860.1"/>
<dbReference type="ProteomicsDB" id="242385"/>
<dbReference type="EnsemblPlants" id="AT1G27860.1">
    <property type="protein sequence ID" value="AT1G27860.1"/>
    <property type="gene ID" value="AT1G27860"/>
</dbReference>
<dbReference type="GeneID" id="839679"/>
<dbReference type="Gramene" id="AT1G27860.1">
    <property type="protein sequence ID" value="AT1G27860.1"/>
    <property type="gene ID" value="AT1G27860"/>
</dbReference>
<dbReference type="KEGG" id="ath:AT1G27860"/>
<dbReference type="Araport" id="AT1G27860"/>
<dbReference type="TAIR" id="AT1G27860"/>
<dbReference type="HOGENOM" id="CLU_053767_0_1_1"/>
<dbReference type="InParanoid" id="Q9C6N2"/>
<dbReference type="OMA" id="ICAMRTF"/>
<dbReference type="PhylomeDB" id="Q9C6N2"/>
<dbReference type="PRO" id="PR:Q9C6N2"/>
<dbReference type="Proteomes" id="UP000006548">
    <property type="component" value="Chromosome 1"/>
</dbReference>
<dbReference type="InterPro" id="IPR006462">
    <property type="entry name" value="MS5"/>
</dbReference>
<dbReference type="NCBIfam" id="TIGR01572">
    <property type="entry name" value="A_thl_para_3677"/>
    <property type="match status" value="1"/>
</dbReference>
<dbReference type="PANTHER" id="PTHR31260:SF77">
    <property type="entry name" value="(RAPE) HYPOTHETICAL PROTEIN"/>
    <property type="match status" value="1"/>
</dbReference>
<dbReference type="PANTHER" id="PTHR31260">
    <property type="entry name" value="CYSTATIN/MONELLIN SUPERFAMILY PROTEIN"/>
    <property type="match status" value="1"/>
</dbReference>
<dbReference type="Pfam" id="PF04776">
    <property type="entry name" value="protein_MS5"/>
    <property type="match status" value="1"/>
</dbReference>
<evidence type="ECO:0000256" key="1">
    <source>
        <dbReference type="SAM" id="MobiDB-lite"/>
    </source>
</evidence>
<evidence type="ECO:0000305" key="2"/>
<gene>
    <name type="ordered locus">At1g27860</name>
    <name type="ORF">F28L5.13</name>
</gene>
<comment type="similarity">
    <text evidence="2">Belongs to the UPF0725 (EMB2204) family.</text>
</comment>
<name>Y1278_ARATH</name>
<proteinExistence type="evidence at transcript level"/>